<proteinExistence type="evidence at protein level"/>
<gene>
    <name evidence="1" type="primary">NPC2</name>
</gene>
<name>NPC2_BOVIN</name>
<sequence length="149" mass="16640">MRFLTVAFLFLALSASALAEPVKFKDCGSWVGVIKEVNVSPCPTQPCKLHRGQSYSVNVTFTSNTQSQSSKAVVHGIVMGIPVPFPIPESDGCKSGIRCPIEKDKTYNYVNKLPVKNEYPSIKVVVEWELTDDKNQRFFCWQIPIEVEA</sequence>
<keyword id="KW-0002">3D-structure</keyword>
<keyword id="KW-0007">Acetylation</keyword>
<keyword id="KW-0153">Cholesterol metabolism</keyword>
<keyword id="KW-0903">Direct protein sequencing</keyword>
<keyword id="KW-1015">Disulfide bond</keyword>
<keyword id="KW-0256">Endoplasmic reticulum</keyword>
<keyword id="KW-0325">Glycoprotein</keyword>
<keyword id="KW-0443">Lipid metabolism</keyword>
<keyword id="KW-0445">Lipid transport</keyword>
<keyword id="KW-0458">Lysosome</keyword>
<keyword id="KW-1185">Reference proteome</keyword>
<keyword id="KW-0964">Secreted</keyword>
<keyword id="KW-0732">Signal</keyword>
<keyword id="KW-0753">Steroid metabolism</keyword>
<keyword id="KW-1207">Sterol metabolism</keyword>
<keyword id="KW-0813">Transport</keyword>
<comment type="function">
    <text evidence="1 2 4 5 6 9">Intracellular cholesterol transporter which acts in concert with NPC1 and plays an important role in the egress of cholesterol from the lysosomal compartment (PubMed:17552909, PubMed:29580834). Unesterified cholesterol that has been released from LDLs in the lumen of the late endosomes/lysosomes is transferred by NPC2 to the cholesterol-binding pocket in the N-terminal domain of NPC1 (By similarity). May bind and mobilize cholesterol that is associated with membranes (PubMed:18823126). NPC2 binds cholesterol with a 1:1 stoichiometry (PubMed:17573352). Can bind a variety of sterols, including lathosterol, desmosterol and the plant sterols stigmasterol and beta-sitosterol (By similarity). The secreted form of NCP2 regulates biliary cholesterol secretion via stimulation of ABCG5/ABCG8-mediated cholesterol transport (By similarity).</text>
</comment>
<comment type="catalytic activity">
    <reaction evidence="4">
        <text>cholesterol(in) = cholesterol(out)</text>
        <dbReference type="Rhea" id="RHEA:39747"/>
        <dbReference type="ChEBI" id="CHEBI:16113"/>
    </reaction>
</comment>
<comment type="subunit">
    <text evidence="1 7 8">Interacts with NPC1 (via the second lumenal domain) in a cholestrol-dependent manner (PubMed:22065762, PubMed:27551080). Interacts with NUS1/NgBR, the interaction stabilizes NCP2 and regulates cholesterol trafficking. Interacts with DHDDS. Interacts with NEDD4L (via C2 domain). Interacts with NPC1L1 (By similarity).</text>
</comment>
<comment type="subcellular location">
    <subcellularLocation>
        <location evidence="1">Secreted</location>
    </subcellularLocation>
    <subcellularLocation>
        <location evidence="1">Endoplasmic reticulum</location>
    </subcellularLocation>
    <subcellularLocation>
        <location evidence="1">Lysosome</location>
    </subcellularLocation>
    <text evidence="1">Interaction with cell-surface M6PR mediates endocytosis and targeting to lysosomes.</text>
</comment>
<comment type="tissue specificity">
    <text>Expressed in kidney, spleen, liver and mammary gland, but not in testis.</text>
</comment>
<comment type="domain">
    <text evidence="5">Binds cholesterol in a hydrophobic pocket; there are no hydrogen bonds between the sterol and the protein.</text>
</comment>
<comment type="similarity">
    <text evidence="12">Belongs to the NPC2 family.</text>
</comment>
<organism>
    <name type="scientific">Bos taurus</name>
    <name type="common">Bovine</name>
    <dbReference type="NCBI Taxonomy" id="9913"/>
    <lineage>
        <taxon>Eukaryota</taxon>
        <taxon>Metazoa</taxon>
        <taxon>Chordata</taxon>
        <taxon>Craniata</taxon>
        <taxon>Vertebrata</taxon>
        <taxon>Euteleostomi</taxon>
        <taxon>Mammalia</taxon>
        <taxon>Eutheria</taxon>
        <taxon>Laurasiatheria</taxon>
        <taxon>Artiodactyla</taxon>
        <taxon>Ruminantia</taxon>
        <taxon>Pecora</taxon>
        <taxon>Bovidae</taxon>
        <taxon>Bovinae</taxon>
        <taxon>Bos</taxon>
    </lineage>
</organism>
<reference key="1">
    <citation type="journal article" date="1997" name="Eur. J. Biochem.">
        <title>Primary structure of EPV20, a secretory glycoprotein containing a previously uncharacterized type of domain.</title>
        <authorList>
            <person name="Larsen L.B."/>
            <person name="Ravn P."/>
            <person name="Boisen A."/>
            <person name="Berglund L."/>
            <person name="Petersen T.E."/>
        </authorList>
    </citation>
    <scope>NUCLEOTIDE SEQUENCE [MRNA]</scope>
    <scope>PARTIAL PROTEIN SEQUENCE</scope>
    <scope>DISULFIDE BONDS</scope>
    <source>
        <tissue>Mammary gland</tissue>
    </source>
</reference>
<reference key="2">
    <citation type="journal article" date="2005" name="BMC Genomics">
        <title>Characterization of 954 bovine full-CDS cDNA sequences.</title>
        <authorList>
            <person name="Harhay G.P."/>
            <person name="Sonstegard T.S."/>
            <person name="Keele J.W."/>
            <person name="Heaton M.P."/>
            <person name="Clawson M.L."/>
            <person name="Snelling W.M."/>
            <person name="Wiedmann R.T."/>
            <person name="Van Tassell C.P."/>
            <person name="Smith T.P.L."/>
        </authorList>
    </citation>
    <scope>NUCLEOTIDE SEQUENCE [LARGE SCALE MRNA]</scope>
</reference>
<reference key="3">
    <citation type="submission" date="2005-08" db="EMBL/GenBank/DDBJ databases">
        <authorList>
            <consortium name="NIH - Mammalian Gene Collection (MGC) project"/>
        </authorList>
    </citation>
    <scope>NUCLEOTIDE SEQUENCE [LARGE SCALE MRNA]</scope>
    <source>
        <strain>Crossbred X Angus</strain>
        <tissue>Ileum</tissue>
    </source>
</reference>
<reference key="4">
    <citation type="journal article" date="2007" name="Biol. Chem.">
        <title>Development of an assay for the intermembrane transfer of cholesterol by Niemann-Pick C2 protein.</title>
        <authorList>
            <person name="Babalola J.O."/>
            <person name="Wendeler M."/>
            <person name="Breiden B."/>
            <person name="Arenz C."/>
            <person name="Schwarzmann G."/>
            <person name="Locatelli-Hoops S."/>
            <person name="Sandhoff K."/>
        </authorList>
    </citation>
    <scope>FUNCTION</scope>
    <scope>CATALYTIC ACTIVITY</scope>
</reference>
<reference key="5">
    <citation type="journal article" date="2008" name="Biochemistry">
        <title>Regulation of sterol transport between membranes and NPC2.</title>
        <authorList>
            <person name="Xu Z."/>
            <person name="Farver W."/>
            <person name="Kodukula S."/>
            <person name="Storch J."/>
        </authorList>
    </citation>
    <scope>FUNCTION</scope>
</reference>
<reference key="6">
    <citation type="journal article" date="2011" name="Proc. Natl. Acad. Sci. U.S.A.">
        <title>Niemann-Pick type C 1 function requires lumenal domain residues that mediate cholesterol-dependent NPC2 binding.</title>
        <authorList>
            <person name="Deffieu M.S."/>
            <person name="Pfeffer S.R."/>
        </authorList>
    </citation>
    <scope>INTERACTION WITH NPC1</scope>
</reference>
<reference key="7">
    <citation type="journal article" date="2016" name="Proc. Natl. Acad. Sci. U.S.A.">
        <title>Clues to the mechanism of cholesterol transfer from the structure of NPC1 middle lumenal domain bound to NPC2.</title>
        <authorList>
            <person name="Li X."/>
            <person name="Saha P."/>
            <person name="Li J."/>
            <person name="Blobel G."/>
            <person name="Pfeffer S.R."/>
        </authorList>
    </citation>
    <scope>INTERACTION WITH NPC1</scope>
</reference>
<reference key="8">
    <citation type="journal article" date="2018" name="Chem. Phys. Lipids">
        <title>Niemann-Pick C2 protein regulates sterol transport between plasma membrane and late endosomes in human fibroblasts.</title>
        <authorList>
            <person name="Berzina Z."/>
            <person name="Solanko L.M."/>
            <person name="Mehadi A.S."/>
            <person name="Jensen M.L.V."/>
            <person name="Lund F.W."/>
            <person name="Modzel M."/>
            <person name="Szomek M."/>
            <person name="Solanko K.A."/>
            <person name="Dupont A."/>
            <person name="Nielsen G.K."/>
            <person name="Heegaard C.W."/>
            <person name="Ejsing C.S."/>
            <person name="Wuestner D."/>
        </authorList>
    </citation>
    <scope>FUNCTION</scope>
</reference>
<reference evidence="13" key="9">
    <citation type="journal article" date="2003" name="Proc. Natl. Acad. Sci. U.S.A.">
        <title>Structure of a cholesterol-binding protein deficient in Niemann-Pick type C2 disease.</title>
        <authorList>
            <person name="Friedland N."/>
            <person name="Liou H.L."/>
            <person name="Lobel P."/>
            <person name="Stock A.M."/>
        </authorList>
    </citation>
    <scope>X-RAY CRYSTALLOGRAPHY (1.70 ANGSTROMS) OF 20-149</scope>
    <scope>GLYCOSYLATION AT ASN-58</scope>
    <scope>DISULFIDE BONDS</scope>
</reference>
<reference evidence="14" key="10">
    <citation type="journal article" date="2007" name="J. Biol. Chem.">
        <title>Structural basis of sterol binding by NPC2, a lysosomal protein deficient in Niemann-Pick type C2 disease.</title>
        <authorList>
            <person name="Xu S."/>
            <person name="Benoff B."/>
            <person name="Liou H.L."/>
            <person name="Lobel P."/>
            <person name="Stock A.M."/>
        </authorList>
    </citation>
    <scope>X-RAY CRYSTALLOGRAPHY (1.81 ANGSTROMS) OF 20-149 IN COMPLEX WITH CHOLESTEROL SULFATE</scope>
    <scope>FUNCTION</scope>
    <scope>GLYCOSYLATION AT ASN-58</scope>
    <scope>DISULFIDE BONDS</scope>
</reference>
<accession>P79345</accession>
<accession>Q3T091</accession>
<accession>Q58DR4</accession>
<dbReference type="EMBL" id="X85799">
    <property type="protein sequence ID" value="CAA59794.1"/>
    <property type="molecule type" value="mRNA"/>
</dbReference>
<dbReference type="EMBL" id="BT021533">
    <property type="protein sequence ID" value="AAX46380.1"/>
    <property type="molecule type" value="mRNA"/>
</dbReference>
<dbReference type="EMBL" id="BC102504">
    <property type="protein sequence ID" value="AAI02505.1"/>
    <property type="molecule type" value="mRNA"/>
</dbReference>
<dbReference type="RefSeq" id="NP_776343.1">
    <property type="nucleotide sequence ID" value="NM_173918.2"/>
</dbReference>
<dbReference type="PDB" id="1NEP">
    <property type="method" value="X-ray"/>
    <property type="resolution" value="1.70 A"/>
    <property type="chains" value="A=20-149"/>
</dbReference>
<dbReference type="PDB" id="2HKA">
    <property type="method" value="X-ray"/>
    <property type="resolution" value="1.81 A"/>
    <property type="chains" value="A/B/C=20-149"/>
</dbReference>
<dbReference type="PDBsum" id="1NEP"/>
<dbReference type="PDBsum" id="2HKA"/>
<dbReference type="SMR" id="P79345"/>
<dbReference type="FunCoup" id="P79345">
    <property type="interactions" value="2345"/>
</dbReference>
<dbReference type="STRING" id="9913.ENSBTAP00000029271"/>
<dbReference type="SwissLipids" id="SLP:000000474"/>
<dbReference type="GlyCosmos" id="P79345">
    <property type="glycosylation" value="1 site, No reported glycans"/>
</dbReference>
<dbReference type="GlyGen" id="P79345">
    <property type="glycosylation" value="1 site"/>
</dbReference>
<dbReference type="iPTMnet" id="P79345"/>
<dbReference type="PaxDb" id="9913-ENSBTAP00000029271"/>
<dbReference type="PeptideAtlas" id="P79345"/>
<dbReference type="GeneID" id="280815"/>
<dbReference type="KEGG" id="bta:280815"/>
<dbReference type="CTD" id="10577"/>
<dbReference type="VEuPathDB" id="HostDB:ENSBTAG00000021955"/>
<dbReference type="eggNOG" id="KOG4063">
    <property type="taxonomic scope" value="Eukaryota"/>
</dbReference>
<dbReference type="HOGENOM" id="CLU_109192_1_0_1"/>
<dbReference type="InParanoid" id="P79345"/>
<dbReference type="OMA" id="QNLFCWE"/>
<dbReference type="OrthoDB" id="6489092at2759"/>
<dbReference type="TreeFam" id="TF317963"/>
<dbReference type="Reactome" id="R-BTA-6798695">
    <property type="pathway name" value="Neutrophil degranulation"/>
</dbReference>
<dbReference type="Reactome" id="R-BTA-8964038">
    <property type="pathway name" value="LDL clearance"/>
</dbReference>
<dbReference type="EvolutionaryTrace" id="P79345"/>
<dbReference type="Proteomes" id="UP000009136">
    <property type="component" value="Chromosome 10"/>
</dbReference>
<dbReference type="Bgee" id="ENSBTAG00000021955">
    <property type="expression patterns" value="Expressed in caput epididymis and 108 other cell types or tissues"/>
</dbReference>
<dbReference type="GO" id="GO:0005783">
    <property type="term" value="C:endoplasmic reticulum"/>
    <property type="evidence" value="ECO:0007669"/>
    <property type="project" value="UniProtKB-SubCell"/>
</dbReference>
<dbReference type="GO" id="GO:0005576">
    <property type="term" value="C:extracellular region"/>
    <property type="evidence" value="ECO:0007669"/>
    <property type="project" value="UniProtKB-SubCell"/>
</dbReference>
<dbReference type="GO" id="GO:0005764">
    <property type="term" value="C:lysosome"/>
    <property type="evidence" value="ECO:0007669"/>
    <property type="project" value="UniProtKB-SubCell"/>
</dbReference>
<dbReference type="GO" id="GO:0015485">
    <property type="term" value="F:cholesterol binding"/>
    <property type="evidence" value="ECO:0000250"/>
    <property type="project" value="UniProtKB"/>
</dbReference>
<dbReference type="GO" id="GO:0033344">
    <property type="term" value="P:cholesterol efflux"/>
    <property type="evidence" value="ECO:0000250"/>
    <property type="project" value="UniProtKB"/>
</dbReference>
<dbReference type="GO" id="GO:0008203">
    <property type="term" value="P:cholesterol metabolic process"/>
    <property type="evidence" value="ECO:0007669"/>
    <property type="project" value="UniProtKB-KW"/>
</dbReference>
<dbReference type="GO" id="GO:0030301">
    <property type="term" value="P:cholesterol transport"/>
    <property type="evidence" value="ECO:0000250"/>
    <property type="project" value="UniProtKB"/>
</dbReference>
<dbReference type="GO" id="GO:0032367">
    <property type="term" value="P:intracellular cholesterol transport"/>
    <property type="evidence" value="ECO:0000314"/>
    <property type="project" value="UniProtKB"/>
</dbReference>
<dbReference type="CDD" id="cd00916">
    <property type="entry name" value="Npc2_like"/>
    <property type="match status" value="1"/>
</dbReference>
<dbReference type="FunFam" id="2.60.40.770:FF:000001">
    <property type="entry name" value="NPC intracellular cholesterol transporter 2"/>
    <property type="match status" value="1"/>
</dbReference>
<dbReference type="Gene3D" id="2.60.40.770">
    <property type="match status" value="1"/>
</dbReference>
<dbReference type="InterPro" id="IPR014756">
    <property type="entry name" value="Ig_E-set"/>
</dbReference>
<dbReference type="InterPro" id="IPR003172">
    <property type="entry name" value="ML_dom"/>
</dbReference>
<dbReference type="InterPro" id="IPR033916">
    <property type="entry name" value="ML_Npc2-like"/>
</dbReference>
<dbReference type="InterPro" id="IPR039670">
    <property type="entry name" value="NPC2-like"/>
</dbReference>
<dbReference type="PANTHER" id="PTHR11306">
    <property type="entry name" value="NIEMANN PICK TYPE C2 PROTEIN NPC2-RELATED"/>
    <property type="match status" value="1"/>
</dbReference>
<dbReference type="PANTHER" id="PTHR11306:SF68">
    <property type="entry name" value="NPC INTRACELLULAR CHOLESTEROL TRANSPORTER 2"/>
    <property type="match status" value="1"/>
</dbReference>
<dbReference type="Pfam" id="PF02221">
    <property type="entry name" value="E1_DerP2_DerF2"/>
    <property type="match status" value="1"/>
</dbReference>
<dbReference type="SMART" id="SM00737">
    <property type="entry name" value="ML"/>
    <property type="match status" value="1"/>
</dbReference>
<dbReference type="SUPFAM" id="SSF81296">
    <property type="entry name" value="E set domains"/>
    <property type="match status" value="1"/>
</dbReference>
<evidence type="ECO:0000250" key="1">
    <source>
        <dbReference type="UniProtKB" id="P61916"/>
    </source>
</evidence>
<evidence type="ECO:0000250" key="2">
    <source>
        <dbReference type="UniProtKB" id="Q9Z0J0"/>
    </source>
</evidence>
<evidence type="ECO:0000269" key="3">
    <source>
    </source>
</evidence>
<evidence type="ECO:0000269" key="4">
    <source>
    </source>
</evidence>
<evidence type="ECO:0000269" key="5">
    <source>
    </source>
</evidence>
<evidence type="ECO:0000269" key="6">
    <source>
    </source>
</evidence>
<evidence type="ECO:0000269" key="7">
    <source>
    </source>
</evidence>
<evidence type="ECO:0000269" key="8">
    <source>
    </source>
</evidence>
<evidence type="ECO:0000269" key="9">
    <source>
    </source>
</evidence>
<evidence type="ECO:0000269" key="10">
    <source>
    </source>
</evidence>
<evidence type="ECO:0000303" key="11">
    <source>
    </source>
</evidence>
<evidence type="ECO:0000305" key="12"/>
<evidence type="ECO:0007744" key="13">
    <source>
        <dbReference type="PDB" id="1NEP"/>
    </source>
</evidence>
<evidence type="ECO:0007744" key="14">
    <source>
        <dbReference type="PDB" id="2HKA"/>
    </source>
</evidence>
<evidence type="ECO:0007829" key="15">
    <source>
        <dbReference type="PDB" id="1NEP"/>
    </source>
</evidence>
<protein>
    <recommendedName>
        <fullName evidence="1">NPC intracellular cholesterol transporter 2</fullName>
    </recommendedName>
    <alternativeName>
        <fullName evidence="11">EPV20</fullName>
    </alternativeName>
    <alternativeName>
        <fullName>Epididymal secretory protein E1</fullName>
    </alternativeName>
    <alternativeName>
        <fullName>Niemann Pick type C2 protein homolog</fullName>
    </alternativeName>
</protein>
<feature type="signal peptide">
    <location>
        <begin position="1"/>
        <end position="19"/>
    </location>
</feature>
<feature type="chain" id="PRO_0000019852" description="NPC intracellular cholesterol transporter 2">
    <location>
        <begin position="20"/>
        <end position="149"/>
    </location>
</feature>
<feature type="modified residue" description="N6-acetyllysine" evidence="2">
    <location>
        <position position="116"/>
    </location>
</feature>
<feature type="glycosylation site" description="N-linked (GlcNAc...) asparagine" evidence="3 5 13 14">
    <location>
        <position position="58"/>
    </location>
</feature>
<feature type="disulfide bond" evidence="3 5 10 13 14">
    <location>
        <begin position="27"/>
        <end position="140"/>
    </location>
</feature>
<feature type="disulfide bond" evidence="3 5 10 13 14">
    <location>
        <begin position="42"/>
        <end position="47"/>
    </location>
</feature>
<feature type="disulfide bond" evidence="3 5 10 13 14">
    <location>
        <begin position="93"/>
        <end position="99"/>
    </location>
</feature>
<feature type="strand" evidence="15">
    <location>
        <begin position="25"/>
        <end position="27"/>
    </location>
</feature>
<feature type="strand" evidence="15">
    <location>
        <begin position="31"/>
        <end position="41"/>
    </location>
</feature>
<feature type="strand" evidence="15">
    <location>
        <begin position="43"/>
        <end position="50"/>
    </location>
</feature>
<feature type="strand" evidence="15">
    <location>
        <begin position="54"/>
        <end position="65"/>
    </location>
</feature>
<feature type="strand" evidence="15">
    <location>
        <begin position="71"/>
        <end position="78"/>
    </location>
</feature>
<feature type="strand" evidence="15">
    <location>
        <begin position="81"/>
        <end position="84"/>
    </location>
</feature>
<feature type="helix" evidence="15">
    <location>
        <begin position="92"/>
        <end position="94"/>
    </location>
</feature>
<feature type="strand" evidence="15">
    <location>
        <begin position="99"/>
        <end position="101"/>
    </location>
</feature>
<feature type="strand" evidence="15">
    <location>
        <begin position="106"/>
        <end position="114"/>
    </location>
</feature>
<feature type="strand" evidence="15">
    <location>
        <begin position="121"/>
        <end position="131"/>
    </location>
</feature>
<feature type="strand" evidence="15">
    <location>
        <begin position="137"/>
        <end position="148"/>
    </location>
</feature>